<name>UPP_CITK8</name>
<organism>
    <name type="scientific">Citrobacter koseri (strain ATCC BAA-895 / CDC 4225-83 / SGSC4696)</name>
    <dbReference type="NCBI Taxonomy" id="290338"/>
    <lineage>
        <taxon>Bacteria</taxon>
        <taxon>Pseudomonadati</taxon>
        <taxon>Pseudomonadota</taxon>
        <taxon>Gammaproteobacteria</taxon>
        <taxon>Enterobacterales</taxon>
        <taxon>Enterobacteriaceae</taxon>
        <taxon>Citrobacter</taxon>
    </lineage>
</organism>
<feature type="chain" id="PRO_1000053700" description="Uracil phosphoribosyltransferase">
    <location>
        <begin position="1"/>
        <end position="208"/>
    </location>
</feature>
<feature type="binding site" evidence="1">
    <location>
        <position position="78"/>
    </location>
    <ligand>
        <name>5-phospho-alpha-D-ribose 1-diphosphate</name>
        <dbReference type="ChEBI" id="CHEBI:58017"/>
    </ligand>
</feature>
<feature type="binding site" evidence="1">
    <location>
        <position position="103"/>
    </location>
    <ligand>
        <name>5-phospho-alpha-D-ribose 1-diphosphate</name>
        <dbReference type="ChEBI" id="CHEBI:58017"/>
    </ligand>
</feature>
<feature type="binding site" evidence="1">
    <location>
        <begin position="130"/>
        <end position="138"/>
    </location>
    <ligand>
        <name>5-phospho-alpha-D-ribose 1-diphosphate</name>
        <dbReference type="ChEBI" id="CHEBI:58017"/>
    </ligand>
</feature>
<feature type="binding site" evidence="1">
    <location>
        <position position="193"/>
    </location>
    <ligand>
        <name>uracil</name>
        <dbReference type="ChEBI" id="CHEBI:17568"/>
    </ligand>
</feature>
<feature type="binding site" evidence="1">
    <location>
        <begin position="198"/>
        <end position="200"/>
    </location>
    <ligand>
        <name>uracil</name>
        <dbReference type="ChEBI" id="CHEBI:17568"/>
    </ligand>
</feature>
<feature type="binding site" evidence="1">
    <location>
        <position position="199"/>
    </location>
    <ligand>
        <name>5-phospho-alpha-D-ribose 1-diphosphate</name>
        <dbReference type="ChEBI" id="CHEBI:58017"/>
    </ligand>
</feature>
<protein>
    <recommendedName>
        <fullName evidence="1">Uracil phosphoribosyltransferase</fullName>
        <ecNumber evidence="1">2.4.2.9</ecNumber>
    </recommendedName>
    <alternativeName>
        <fullName evidence="1">UMP pyrophosphorylase</fullName>
    </alternativeName>
    <alternativeName>
        <fullName evidence="1">UPRTase</fullName>
    </alternativeName>
</protein>
<reference key="1">
    <citation type="submission" date="2007-08" db="EMBL/GenBank/DDBJ databases">
        <authorList>
            <consortium name="The Citrobacter koseri Genome Sequencing Project"/>
            <person name="McClelland M."/>
            <person name="Sanderson E.K."/>
            <person name="Porwollik S."/>
            <person name="Spieth J."/>
            <person name="Clifton W.S."/>
            <person name="Latreille P."/>
            <person name="Courtney L."/>
            <person name="Wang C."/>
            <person name="Pepin K."/>
            <person name="Bhonagiri V."/>
            <person name="Nash W."/>
            <person name="Johnson M."/>
            <person name="Thiruvilangam P."/>
            <person name="Wilson R."/>
        </authorList>
    </citation>
    <scope>NUCLEOTIDE SEQUENCE [LARGE SCALE GENOMIC DNA]</scope>
    <source>
        <strain>ATCC BAA-895 / CDC 4225-83 / SGSC4696</strain>
    </source>
</reference>
<proteinExistence type="inferred from homology"/>
<keyword id="KW-0021">Allosteric enzyme</keyword>
<keyword id="KW-0328">Glycosyltransferase</keyword>
<keyword id="KW-0342">GTP-binding</keyword>
<keyword id="KW-0460">Magnesium</keyword>
<keyword id="KW-0547">Nucleotide-binding</keyword>
<keyword id="KW-1185">Reference proteome</keyword>
<keyword id="KW-0808">Transferase</keyword>
<accession>A8AD93</accession>
<sequence>MKIVEVKHPLVKHKLGLMRENDISTKRFRELASEVGSLLTYEATADLETETVTIDGWNGPVEIEQIKGKKITVVPILRAGLGMMEGVLEHVPSARISVVGIYRNEETLEPVPYFQKLVSNIDERMALVVDPMLATGGSMIATIDLLKNAGCHSIKVLVLVAAPEGIAALEKAHPDVELYTASIDKGLNEHGYIIPGLGDAGDKIFGTK</sequence>
<dbReference type="EC" id="2.4.2.9" evidence="1"/>
<dbReference type="EMBL" id="CP000822">
    <property type="protein sequence ID" value="ABV11456.1"/>
    <property type="molecule type" value="Genomic_DNA"/>
</dbReference>
<dbReference type="RefSeq" id="WP_012131286.1">
    <property type="nucleotide sequence ID" value="NC_009792.1"/>
</dbReference>
<dbReference type="SMR" id="A8AD93"/>
<dbReference type="STRING" id="290338.CKO_00293"/>
<dbReference type="GeneID" id="45134569"/>
<dbReference type="KEGG" id="cko:CKO_00293"/>
<dbReference type="HOGENOM" id="CLU_067096_2_2_6"/>
<dbReference type="OrthoDB" id="9781675at2"/>
<dbReference type="UniPathway" id="UPA00574">
    <property type="reaction ID" value="UER00636"/>
</dbReference>
<dbReference type="Proteomes" id="UP000008148">
    <property type="component" value="Chromosome"/>
</dbReference>
<dbReference type="GO" id="GO:0005525">
    <property type="term" value="F:GTP binding"/>
    <property type="evidence" value="ECO:0007669"/>
    <property type="project" value="UniProtKB-KW"/>
</dbReference>
<dbReference type="GO" id="GO:0000287">
    <property type="term" value="F:magnesium ion binding"/>
    <property type="evidence" value="ECO:0007669"/>
    <property type="project" value="UniProtKB-UniRule"/>
</dbReference>
<dbReference type="GO" id="GO:0004845">
    <property type="term" value="F:uracil phosphoribosyltransferase activity"/>
    <property type="evidence" value="ECO:0007669"/>
    <property type="project" value="UniProtKB-UniRule"/>
</dbReference>
<dbReference type="GO" id="GO:0044206">
    <property type="term" value="P:UMP salvage"/>
    <property type="evidence" value="ECO:0007669"/>
    <property type="project" value="UniProtKB-UniRule"/>
</dbReference>
<dbReference type="GO" id="GO:0006223">
    <property type="term" value="P:uracil salvage"/>
    <property type="evidence" value="ECO:0007669"/>
    <property type="project" value="InterPro"/>
</dbReference>
<dbReference type="CDD" id="cd06223">
    <property type="entry name" value="PRTases_typeI"/>
    <property type="match status" value="1"/>
</dbReference>
<dbReference type="FunFam" id="3.40.50.2020:FF:000003">
    <property type="entry name" value="Uracil phosphoribosyltransferase"/>
    <property type="match status" value="1"/>
</dbReference>
<dbReference type="Gene3D" id="3.40.50.2020">
    <property type="match status" value="1"/>
</dbReference>
<dbReference type="HAMAP" id="MF_01218_B">
    <property type="entry name" value="Upp_B"/>
    <property type="match status" value="1"/>
</dbReference>
<dbReference type="InterPro" id="IPR000836">
    <property type="entry name" value="PRibTrfase_dom"/>
</dbReference>
<dbReference type="InterPro" id="IPR029057">
    <property type="entry name" value="PRTase-like"/>
</dbReference>
<dbReference type="InterPro" id="IPR034332">
    <property type="entry name" value="Upp_B"/>
</dbReference>
<dbReference type="InterPro" id="IPR050054">
    <property type="entry name" value="UPRTase/APRTase"/>
</dbReference>
<dbReference type="InterPro" id="IPR005765">
    <property type="entry name" value="Ura_phspho_trans"/>
</dbReference>
<dbReference type="NCBIfam" id="NF001097">
    <property type="entry name" value="PRK00129.1"/>
    <property type="match status" value="1"/>
</dbReference>
<dbReference type="NCBIfam" id="TIGR01091">
    <property type="entry name" value="upp"/>
    <property type="match status" value="1"/>
</dbReference>
<dbReference type="PANTHER" id="PTHR32315">
    <property type="entry name" value="ADENINE PHOSPHORIBOSYLTRANSFERASE"/>
    <property type="match status" value="1"/>
</dbReference>
<dbReference type="PANTHER" id="PTHR32315:SF4">
    <property type="entry name" value="URACIL PHOSPHORIBOSYLTRANSFERASE, CHLOROPLASTIC"/>
    <property type="match status" value="1"/>
</dbReference>
<dbReference type="Pfam" id="PF14681">
    <property type="entry name" value="UPRTase"/>
    <property type="match status" value="1"/>
</dbReference>
<dbReference type="SUPFAM" id="SSF53271">
    <property type="entry name" value="PRTase-like"/>
    <property type="match status" value="1"/>
</dbReference>
<gene>
    <name evidence="1" type="primary">upp</name>
    <name type="ordered locus">CKO_00293</name>
</gene>
<evidence type="ECO:0000255" key="1">
    <source>
        <dbReference type="HAMAP-Rule" id="MF_01218"/>
    </source>
</evidence>
<comment type="function">
    <text evidence="1">Catalyzes the conversion of uracil and 5-phospho-alpha-D-ribose 1-diphosphate (PRPP) to UMP and diphosphate.</text>
</comment>
<comment type="catalytic activity">
    <reaction evidence="1">
        <text>UMP + diphosphate = 5-phospho-alpha-D-ribose 1-diphosphate + uracil</text>
        <dbReference type="Rhea" id="RHEA:13017"/>
        <dbReference type="ChEBI" id="CHEBI:17568"/>
        <dbReference type="ChEBI" id="CHEBI:33019"/>
        <dbReference type="ChEBI" id="CHEBI:57865"/>
        <dbReference type="ChEBI" id="CHEBI:58017"/>
        <dbReference type="EC" id="2.4.2.9"/>
    </reaction>
</comment>
<comment type="cofactor">
    <cofactor evidence="1">
        <name>Mg(2+)</name>
        <dbReference type="ChEBI" id="CHEBI:18420"/>
    </cofactor>
    <text evidence="1">Binds 1 Mg(2+) ion per subunit. The magnesium is bound as Mg-PRPP.</text>
</comment>
<comment type="activity regulation">
    <text evidence="1">Allosterically activated by GTP.</text>
</comment>
<comment type="pathway">
    <text evidence="1">Pyrimidine metabolism; UMP biosynthesis via salvage pathway; UMP from uracil: step 1/1.</text>
</comment>
<comment type="similarity">
    <text evidence="1">Belongs to the UPRTase family.</text>
</comment>